<dbReference type="EMBL" id="CU329671">
    <property type="protein sequence ID" value="CAA20108.1"/>
    <property type="molecule type" value="Genomic_DNA"/>
</dbReference>
<dbReference type="PIR" id="T39852">
    <property type="entry name" value="T39852"/>
</dbReference>
<dbReference type="RefSeq" id="NP_595806.1">
    <property type="nucleotide sequence ID" value="NM_001021709.2"/>
</dbReference>
<dbReference type="BioGRID" id="276809">
    <property type="interactions" value="19"/>
</dbReference>
<dbReference type="iPTMnet" id="O74337"/>
<dbReference type="PaxDb" id="4896-SPBC1A4.04.1"/>
<dbReference type="EnsemblFungi" id="SPBC1A4.04.1">
    <property type="protein sequence ID" value="SPBC1A4.04.1:pep"/>
    <property type="gene ID" value="SPBC1A4.04"/>
</dbReference>
<dbReference type="KEGG" id="spo:2540278"/>
<dbReference type="PomBase" id="SPBC1A4.04"/>
<dbReference type="VEuPathDB" id="FungiDB:SPBC1A4.04"/>
<dbReference type="HOGENOM" id="CLU_1116303_0_0_1"/>
<dbReference type="InParanoid" id="O74337"/>
<dbReference type="PRO" id="PR:O74337"/>
<dbReference type="Proteomes" id="UP000002485">
    <property type="component" value="Chromosome II"/>
</dbReference>
<dbReference type="GO" id="GO:0005829">
    <property type="term" value="C:cytosol"/>
    <property type="evidence" value="ECO:0007005"/>
    <property type="project" value="PomBase"/>
</dbReference>
<dbReference type="GO" id="GO:0005634">
    <property type="term" value="C:nucleus"/>
    <property type="evidence" value="ECO:0007005"/>
    <property type="project" value="PomBase"/>
</dbReference>
<evidence type="ECO:0000269" key="1">
    <source>
    </source>
</evidence>
<name>YH24_SCHPO</name>
<accession>O74337</accession>
<organism>
    <name type="scientific">Schizosaccharomyces pombe (strain 972 / ATCC 24843)</name>
    <name type="common">Fission yeast</name>
    <dbReference type="NCBI Taxonomy" id="284812"/>
    <lineage>
        <taxon>Eukaryota</taxon>
        <taxon>Fungi</taxon>
        <taxon>Dikarya</taxon>
        <taxon>Ascomycota</taxon>
        <taxon>Taphrinomycotina</taxon>
        <taxon>Schizosaccharomycetes</taxon>
        <taxon>Schizosaccharomycetales</taxon>
        <taxon>Schizosaccharomycetaceae</taxon>
        <taxon>Schizosaccharomyces</taxon>
    </lineage>
</organism>
<gene>
    <name type="ORF">SPBC1A4.04</name>
</gene>
<keyword id="KW-0963">Cytoplasm</keyword>
<keyword id="KW-0539">Nucleus</keyword>
<keyword id="KW-1185">Reference proteome</keyword>
<reference key="1">
    <citation type="journal article" date="2002" name="Nature">
        <title>The genome sequence of Schizosaccharomyces pombe.</title>
        <authorList>
            <person name="Wood V."/>
            <person name="Gwilliam R."/>
            <person name="Rajandream M.A."/>
            <person name="Lyne M.H."/>
            <person name="Lyne R."/>
            <person name="Stewart A."/>
            <person name="Sgouros J.G."/>
            <person name="Peat N."/>
            <person name="Hayles J."/>
            <person name="Baker S.G."/>
            <person name="Basham D."/>
            <person name="Bowman S."/>
            <person name="Brooks K."/>
            <person name="Brown D."/>
            <person name="Brown S."/>
            <person name="Chillingworth T."/>
            <person name="Churcher C.M."/>
            <person name="Collins M."/>
            <person name="Connor R."/>
            <person name="Cronin A."/>
            <person name="Davis P."/>
            <person name="Feltwell T."/>
            <person name="Fraser A."/>
            <person name="Gentles S."/>
            <person name="Goble A."/>
            <person name="Hamlin N."/>
            <person name="Harris D.E."/>
            <person name="Hidalgo J."/>
            <person name="Hodgson G."/>
            <person name="Holroyd S."/>
            <person name="Hornsby T."/>
            <person name="Howarth S."/>
            <person name="Huckle E.J."/>
            <person name="Hunt S."/>
            <person name="Jagels K."/>
            <person name="James K.D."/>
            <person name="Jones L."/>
            <person name="Jones M."/>
            <person name="Leather S."/>
            <person name="McDonald S."/>
            <person name="McLean J."/>
            <person name="Mooney P."/>
            <person name="Moule S."/>
            <person name="Mungall K.L."/>
            <person name="Murphy L.D."/>
            <person name="Niblett D."/>
            <person name="Odell C."/>
            <person name="Oliver K."/>
            <person name="O'Neil S."/>
            <person name="Pearson D."/>
            <person name="Quail M.A."/>
            <person name="Rabbinowitsch E."/>
            <person name="Rutherford K.M."/>
            <person name="Rutter S."/>
            <person name="Saunders D."/>
            <person name="Seeger K."/>
            <person name="Sharp S."/>
            <person name="Skelton J."/>
            <person name="Simmonds M.N."/>
            <person name="Squares R."/>
            <person name="Squares S."/>
            <person name="Stevens K."/>
            <person name="Taylor K."/>
            <person name="Taylor R.G."/>
            <person name="Tivey A."/>
            <person name="Walsh S.V."/>
            <person name="Warren T."/>
            <person name="Whitehead S."/>
            <person name="Woodward J.R."/>
            <person name="Volckaert G."/>
            <person name="Aert R."/>
            <person name="Robben J."/>
            <person name="Grymonprez B."/>
            <person name="Weltjens I."/>
            <person name="Vanstreels E."/>
            <person name="Rieger M."/>
            <person name="Schaefer M."/>
            <person name="Mueller-Auer S."/>
            <person name="Gabel C."/>
            <person name="Fuchs M."/>
            <person name="Duesterhoeft A."/>
            <person name="Fritzc C."/>
            <person name="Holzer E."/>
            <person name="Moestl D."/>
            <person name="Hilbert H."/>
            <person name="Borzym K."/>
            <person name="Langer I."/>
            <person name="Beck A."/>
            <person name="Lehrach H."/>
            <person name="Reinhardt R."/>
            <person name="Pohl T.M."/>
            <person name="Eger P."/>
            <person name="Zimmermann W."/>
            <person name="Wedler H."/>
            <person name="Wambutt R."/>
            <person name="Purnelle B."/>
            <person name="Goffeau A."/>
            <person name="Cadieu E."/>
            <person name="Dreano S."/>
            <person name="Gloux S."/>
            <person name="Lelaure V."/>
            <person name="Mottier S."/>
            <person name="Galibert F."/>
            <person name="Aves S.J."/>
            <person name="Xiang Z."/>
            <person name="Hunt C."/>
            <person name="Moore K."/>
            <person name="Hurst S.M."/>
            <person name="Lucas M."/>
            <person name="Rochet M."/>
            <person name="Gaillardin C."/>
            <person name="Tallada V.A."/>
            <person name="Garzon A."/>
            <person name="Thode G."/>
            <person name="Daga R.R."/>
            <person name="Cruzado L."/>
            <person name="Jimenez J."/>
            <person name="Sanchez M."/>
            <person name="del Rey F."/>
            <person name="Benito J."/>
            <person name="Dominguez A."/>
            <person name="Revuelta J.L."/>
            <person name="Moreno S."/>
            <person name="Armstrong J."/>
            <person name="Forsburg S.L."/>
            <person name="Cerutti L."/>
            <person name="Lowe T."/>
            <person name="McCombie W.R."/>
            <person name="Paulsen I."/>
            <person name="Potashkin J."/>
            <person name="Shpakovski G.V."/>
            <person name="Ussery D."/>
            <person name="Barrell B.G."/>
            <person name="Nurse P."/>
        </authorList>
    </citation>
    <scope>NUCLEOTIDE SEQUENCE [LARGE SCALE GENOMIC DNA]</scope>
    <source>
        <strain>972 / ATCC 24843</strain>
    </source>
</reference>
<reference key="2">
    <citation type="journal article" date="2006" name="Nat. Biotechnol.">
        <title>ORFeome cloning and global analysis of protein localization in the fission yeast Schizosaccharomyces pombe.</title>
        <authorList>
            <person name="Matsuyama A."/>
            <person name="Arai R."/>
            <person name="Yashiroda Y."/>
            <person name="Shirai A."/>
            <person name="Kamata A."/>
            <person name="Sekido S."/>
            <person name="Kobayashi Y."/>
            <person name="Hashimoto A."/>
            <person name="Hamamoto M."/>
            <person name="Hiraoka Y."/>
            <person name="Horinouchi S."/>
            <person name="Yoshida M."/>
        </authorList>
    </citation>
    <scope>SUBCELLULAR LOCATION [LARGE SCALE ANALYSIS]</scope>
</reference>
<sequence length="249" mass="27482">MESCTRSSLQQLVAADSKSSNFCFRNLSQSSNNNVSYASSSNRNFVPQNVLNNEYQSFQHSSTSQPSVLRQGKNAFLKPSQLSFNMNSSEISNTHWARDFNILTSNFASSSVTSAPTQSSHISNFTNSQKYFANDLPNSLTDQPLAQPSASQRSTWLPCSAAVSTSSPSSDPFFDSYLEQAFEKAERLANEQQKISKVEKTFGTLDSIGTEQDDCFDPDYSNLPLFPQENASPPLFRKASCNSGFTTKC</sequence>
<comment type="subcellular location">
    <subcellularLocation>
        <location evidence="1">Cytoplasm</location>
    </subcellularLocation>
    <subcellularLocation>
        <location evidence="1">Nucleus</location>
    </subcellularLocation>
</comment>
<feature type="chain" id="PRO_0000304100" description="Uncharacterized protein C1A4.04">
    <location>
        <begin position="1"/>
        <end position="249"/>
    </location>
</feature>
<proteinExistence type="predicted"/>
<protein>
    <recommendedName>
        <fullName>Uncharacterized protein C1A4.04</fullName>
    </recommendedName>
</protein>